<evidence type="ECO:0000255" key="1">
    <source>
        <dbReference type="HAMAP-Rule" id="MF_00445"/>
    </source>
</evidence>
<organism>
    <name type="scientific">Nymphaea alba</name>
    <name type="common">White water-lily</name>
    <name type="synonym">Castalia alba</name>
    <dbReference type="NCBI Taxonomy" id="34301"/>
    <lineage>
        <taxon>Eukaryota</taxon>
        <taxon>Viridiplantae</taxon>
        <taxon>Streptophyta</taxon>
        <taxon>Embryophyta</taxon>
        <taxon>Tracheophyta</taxon>
        <taxon>Spermatophyta</taxon>
        <taxon>Magnoliopsida</taxon>
        <taxon>Nymphaeales</taxon>
        <taxon>Nymphaeaceae</taxon>
        <taxon>Nymphaea</taxon>
    </lineage>
</organism>
<protein>
    <recommendedName>
        <fullName evidence="1">NAD(P)H-quinone oxidoreductase subunit 2 A, chloroplastic</fullName>
        <ecNumber evidence="1">7.1.1.-</ecNumber>
    </recommendedName>
    <alternativeName>
        <fullName evidence="1">NAD(P)H dehydrogenase, subunit 2 A</fullName>
    </alternativeName>
    <alternativeName>
        <fullName evidence="1">NADH-plastoquinone oxidoreductase subunit 2 A</fullName>
    </alternativeName>
</protein>
<proteinExistence type="inferred from homology"/>
<reference key="1">
    <citation type="journal article" date="2004" name="Mol. Biol. Evol.">
        <title>The chloroplast genome of Nymphaea alba: whole-genome analyses and the problem of identifying the most basal angiosperm.</title>
        <authorList>
            <person name="Goremykin V.V."/>
            <person name="Hirsch-Ernst K.I."/>
            <person name="Woelfl S."/>
            <person name="Hellwig F.H."/>
        </authorList>
    </citation>
    <scope>NUCLEOTIDE SEQUENCE [LARGE SCALE GENOMIC DNA]</scope>
</reference>
<gene>
    <name evidence="1" type="primary">ndhB1</name>
</gene>
<keyword id="KW-0150">Chloroplast</keyword>
<keyword id="KW-0472">Membrane</keyword>
<keyword id="KW-0520">NAD</keyword>
<keyword id="KW-0521">NADP</keyword>
<keyword id="KW-0934">Plastid</keyword>
<keyword id="KW-0618">Plastoquinone</keyword>
<keyword id="KW-0874">Quinone</keyword>
<keyword id="KW-0793">Thylakoid</keyword>
<keyword id="KW-1278">Translocase</keyword>
<keyword id="KW-0812">Transmembrane</keyword>
<keyword id="KW-1133">Transmembrane helix</keyword>
<keyword id="KW-0813">Transport</keyword>
<comment type="function">
    <text evidence="1">NDH shuttles electrons from NAD(P)H:plastoquinone, via FMN and iron-sulfur (Fe-S) centers, to quinones in the photosynthetic chain and possibly in a chloroplast respiratory chain. The immediate electron acceptor for the enzyme in this species is believed to be plastoquinone. Couples the redox reaction to proton translocation, and thus conserves the redox energy in a proton gradient.</text>
</comment>
<comment type="catalytic activity">
    <reaction evidence="1">
        <text>a plastoquinone + NADH + (n+1) H(+)(in) = a plastoquinol + NAD(+) + n H(+)(out)</text>
        <dbReference type="Rhea" id="RHEA:42608"/>
        <dbReference type="Rhea" id="RHEA-COMP:9561"/>
        <dbReference type="Rhea" id="RHEA-COMP:9562"/>
        <dbReference type="ChEBI" id="CHEBI:15378"/>
        <dbReference type="ChEBI" id="CHEBI:17757"/>
        <dbReference type="ChEBI" id="CHEBI:57540"/>
        <dbReference type="ChEBI" id="CHEBI:57945"/>
        <dbReference type="ChEBI" id="CHEBI:62192"/>
    </reaction>
</comment>
<comment type="catalytic activity">
    <reaction evidence="1">
        <text>a plastoquinone + NADPH + (n+1) H(+)(in) = a plastoquinol + NADP(+) + n H(+)(out)</text>
        <dbReference type="Rhea" id="RHEA:42612"/>
        <dbReference type="Rhea" id="RHEA-COMP:9561"/>
        <dbReference type="Rhea" id="RHEA-COMP:9562"/>
        <dbReference type="ChEBI" id="CHEBI:15378"/>
        <dbReference type="ChEBI" id="CHEBI:17757"/>
        <dbReference type="ChEBI" id="CHEBI:57783"/>
        <dbReference type="ChEBI" id="CHEBI:58349"/>
        <dbReference type="ChEBI" id="CHEBI:62192"/>
    </reaction>
</comment>
<comment type="subunit">
    <text evidence="1">NDH is composed of at least 16 different subunits, 5 of which are encoded in the nucleus.</text>
</comment>
<comment type="subcellular location">
    <subcellularLocation>
        <location evidence="1">Plastid</location>
        <location evidence="1">Chloroplast thylakoid membrane</location>
        <topology evidence="1">Multi-pass membrane protein</topology>
    </subcellularLocation>
</comment>
<comment type="similarity">
    <text evidence="1">Belongs to the complex I subunit 2 family.</text>
</comment>
<dbReference type="EC" id="7.1.1.-" evidence="1"/>
<dbReference type="EMBL" id="AJ627251">
    <property type="protein sequence ID" value="CAF28657.1"/>
    <property type="molecule type" value="Genomic_DNA"/>
</dbReference>
<dbReference type="SMR" id="P0CD04"/>
<dbReference type="GO" id="GO:0009535">
    <property type="term" value="C:chloroplast thylakoid membrane"/>
    <property type="evidence" value="ECO:0007669"/>
    <property type="project" value="UniProtKB-SubCell"/>
</dbReference>
<dbReference type="GO" id="GO:0008137">
    <property type="term" value="F:NADH dehydrogenase (ubiquinone) activity"/>
    <property type="evidence" value="ECO:0007669"/>
    <property type="project" value="InterPro"/>
</dbReference>
<dbReference type="GO" id="GO:0048038">
    <property type="term" value="F:quinone binding"/>
    <property type="evidence" value="ECO:0007669"/>
    <property type="project" value="UniProtKB-KW"/>
</dbReference>
<dbReference type="GO" id="GO:0042773">
    <property type="term" value="P:ATP synthesis coupled electron transport"/>
    <property type="evidence" value="ECO:0007669"/>
    <property type="project" value="InterPro"/>
</dbReference>
<dbReference type="GO" id="GO:0019684">
    <property type="term" value="P:photosynthesis, light reaction"/>
    <property type="evidence" value="ECO:0007669"/>
    <property type="project" value="UniProtKB-UniRule"/>
</dbReference>
<dbReference type="HAMAP" id="MF_00445">
    <property type="entry name" value="NDH1_NuoN_1"/>
    <property type="match status" value="1"/>
</dbReference>
<dbReference type="InterPro" id="IPR010096">
    <property type="entry name" value="NADH-Q_OxRdtase_suN/2"/>
</dbReference>
<dbReference type="InterPro" id="IPR001750">
    <property type="entry name" value="ND/Mrp_TM"/>
</dbReference>
<dbReference type="InterPro" id="IPR045693">
    <property type="entry name" value="Ndh2_N"/>
</dbReference>
<dbReference type="NCBIfam" id="TIGR01770">
    <property type="entry name" value="NDH_I_N"/>
    <property type="match status" value="1"/>
</dbReference>
<dbReference type="NCBIfam" id="NF002701">
    <property type="entry name" value="PRK02504.1"/>
    <property type="match status" value="1"/>
</dbReference>
<dbReference type="PANTHER" id="PTHR22773">
    <property type="entry name" value="NADH DEHYDROGENASE"/>
    <property type="match status" value="1"/>
</dbReference>
<dbReference type="Pfam" id="PF19530">
    <property type="entry name" value="Ndh2_N"/>
    <property type="match status" value="1"/>
</dbReference>
<dbReference type="Pfam" id="PF00361">
    <property type="entry name" value="Proton_antipo_M"/>
    <property type="match status" value="1"/>
</dbReference>
<dbReference type="PRINTS" id="PR01434">
    <property type="entry name" value="NADHDHGNASE5"/>
</dbReference>
<geneLocation type="chloroplast"/>
<name>NU2C1_NYMAL</name>
<accession>P0CD04</accession>
<accession>Q6EVY9</accession>
<sequence>MIWHVQNENFILDSTRIFMKAFHLLLFNGSFIFPECILIFGLILLLMIDLTSDQKDTPWLYFISSTSLVMSITALLFRWREEPMISFSGNFQTNNFNEIFQFLILLCSTLCIPLSVEYIECTEMAITEFLLFVLTATLGGMFLCGANDLITIFVAPECFSLCSYLLSGYTKRDVRSNEATMKYLLMGGASSSILVYGFSWLYGSSGGEIELQEIVNGLINTQMYNSPGISIALISITVGIGFKLSPAPFHQWTPDVYEGSPTPVVAFLSVTSKVAASASATRIFDIPFYFSSNEWHLLLEILAILSMILGNLIAITQTSMKRMLAYSSIGQIGYVIIGIIVGDSNDGYASMITYMLFYIAMNLGTFACIVLFGLRTGTDNIRDYAGLYTKDPFLALSSALCLLSLGGIPPLAGFFGKLYLFWCGWQAGLYFLVSIGLLTSVVSIYYYLKIIKLLMTGRNKEITPHVRNYRRSPLRSNNSIELSMIVCVIASTIPGISMNPIIAIAQDTLF</sequence>
<feature type="chain" id="PRO_0000117669" description="NAD(P)H-quinone oxidoreductase subunit 2 A, chloroplastic">
    <location>
        <begin position="1"/>
        <end position="510"/>
    </location>
</feature>
<feature type="transmembrane region" description="Helical" evidence="1">
    <location>
        <begin position="31"/>
        <end position="51"/>
    </location>
</feature>
<feature type="transmembrane region" description="Helical" evidence="1">
    <location>
        <begin position="57"/>
        <end position="77"/>
    </location>
</feature>
<feature type="transmembrane region" description="Helical" evidence="1">
    <location>
        <begin position="99"/>
        <end position="119"/>
    </location>
</feature>
<feature type="transmembrane region" description="Helical" evidence="1">
    <location>
        <begin position="124"/>
        <end position="144"/>
    </location>
</feature>
<feature type="transmembrane region" description="Helical" evidence="1">
    <location>
        <begin position="149"/>
        <end position="169"/>
    </location>
</feature>
<feature type="transmembrane region" description="Helical" evidence="1">
    <location>
        <begin position="183"/>
        <end position="203"/>
    </location>
</feature>
<feature type="transmembrane region" description="Helical" evidence="1">
    <location>
        <begin position="229"/>
        <end position="249"/>
    </location>
</feature>
<feature type="transmembrane region" description="Helical" evidence="1">
    <location>
        <begin position="295"/>
        <end position="315"/>
    </location>
</feature>
<feature type="transmembrane region" description="Helical" evidence="1">
    <location>
        <begin position="323"/>
        <end position="343"/>
    </location>
</feature>
<feature type="transmembrane region" description="Helical" evidence="1">
    <location>
        <begin position="354"/>
        <end position="374"/>
    </location>
</feature>
<feature type="transmembrane region" description="Helical" evidence="1">
    <location>
        <begin position="395"/>
        <end position="415"/>
    </location>
</feature>
<feature type="transmembrane region" description="Helical" evidence="1">
    <location>
        <begin position="418"/>
        <end position="438"/>
    </location>
</feature>
<feature type="transmembrane region" description="Helical" evidence="1">
    <location>
        <begin position="484"/>
        <end position="504"/>
    </location>
</feature>